<keyword id="KW-0963">Cytoplasm</keyword>
<keyword id="KW-0489">Methyltransferase</keyword>
<keyword id="KW-1185">Reference proteome</keyword>
<keyword id="KW-0949">S-adenosyl-L-methionine</keyword>
<keyword id="KW-0808">Transferase</keyword>
<feature type="chain" id="PRO_0000192265" description="Ribosomal protein L11 methyltransferase">
    <location>
        <begin position="1"/>
        <end position="293"/>
    </location>
</feature>
<feature type="binding site" evidence="1">
    <location>
        <position position="145"/>
    </location>
    <ligand>
        <name>S-adenosyl-L-methionine</name>
        <dbReference type="ChEBI" id="CHEBI:59789"/>
    </ligand>
</feature>
<feature type="binding site" evidence="1">
    <location>
        <position position="166"/>
    </location>
    <ligand>
        <name>S-adenosyl-L-methionine</name>
        <dbReference type="ChEBI" id="CHEBI:59789"/>
    </ligand>
</feature>
<feature type="binding site" evidence="1">
    <location>
        <position position="188"/>
    </location>
    <ligand>
        <name>S-adenosyl-L-methionine</name>
        <dbReference type="ChEBI" id="CHEBI:59789"/>
    </ligand>
</feature>
<feature type="binding site" evidence="1">
    <location>
        <position position="230"/>
    </location>
    <ligand>
        <name>S-adenosyl-L-methionine</name>
        <dbReference type="ChEBI" id="CHEBI:59789"/>
    </ligand>
</feature>
<gene>
    <name evidence="1" type="primary">prmA</name>
    <name type="ordered locus">HD_0016</name>
</gene>
<accession>Q7VPN5</accession>
<sequence>MAWLQIRLNSTDKYAEQISDFLEEIGAVSVTFMDSQDTPIFEPLPGETRLWGNTDVMGLFDAETDMQAVVSALITSGLVTADFAHKVEQIEDKDWEREWMDNFHPMQFGQRLWICPSWREVPDEKAVNIMLDPGLAFGTGTHPTTALCLQWLDGLDLTGKTVIDFGCGSGILAISALKLGAKQAIGIDIDPQAILASQNNAAANGVADRLQLFLAKDQPQALQADVVVANILAGPLKELAPNIMTLVKPQGYLGLSGILATQAQSVCQAYAAVFKLDPVVEKEEWCRITGIKQ</sequence>
<organism>
    <name type="scientific">Haemophilus ducreyi (strain 35000HP / ATCC 700724)</name>
    <dbReference type="NCBI Taxonomy" id="233412"/>
    <lineage>
        <taxon>Bacteria</taxon>
        <taxon>Pseudomonadati</taxon>
        <taxon>Pseudomonadota</taxon>
        <taxon>Gammaproteobacteria</taxon>
        <taxon>Pasteurellales</taxon>
        <taxon>Pasteurellaceae</taxon>
        <taxon>Haemophilus</taxon>
    </lineage>
</organism>
<name>PRMA_HAEDU</name>
<comment type="function">
    <text evidence="1">Methylates ribosomal protein L11.</text>
</comment>
<comment type="catalytic activity">
    <reaction evidence="1">
        <text>L-lysyl-[protein] + 3 S-adenosyl-L-methionine = N(6),N(6),N(6)-trimethyl-L-lysyl-[protein] + 3 S-adenosyl-L-homocysteine + 3 H(+)</text>
        <dbReference type="Rhea" id="RHEA:54192"/>
        <dbReference type="Rhea" id="RHEA-COMP:9752"/>
        <dbReference type="Rhea" id="RHEA-COMP:13826"/>
        <dbReference type="ChEBI" id="CHEBI:15378"/>
        <dbReference type="ChEBI" id="CHEBI:29969"/>
        <dbReference type="ChEBI" id="CHEBI:57856"/>
        <dbReference type="ChEBI" id="CHEBI:59789"/>
        <dbReference type="ChEBI" id="CHEBI:61961"/>
    </reaction>
</comment>
<comment type="subcellular location">
    <subcellularLocation>
        <location evidence="1">Cytoplasm</location>
    </subcellularLocation>
</comment>
<comment type="similarity">
    <text evidence="1">Belongs to the methyltransferase superfamily. PrmA family.</text>
</comment>
<dbReference type="EC" id="2.1.1.-" evidence="1"/>
<dbReference type="EMBL" id="AE017143">
    <property type="protein sequence ID" value="AAP95039.1"/>
    <property type="molecule type" value="Genomic_DNA"/>
</dbReference>
<dbReference type="RefSeq" id="WP_010944093.1">
    <property type="nucleotide sequence ID" value="NC_002940.2"/>
</dbReference>
<dbReference type="SMR" id="Q7VPN5"/>
<dbReference type="STRING" id="233412.HD_0016"/>
<dbReference type="KEGG" id="hdu:HD_0016"/>
<dbReference type="eggNOG" id="COG2264">
    <property type="taxonomic scope" value="Bacteria"/>
</dbReference>
<dbReference type="HOGENOM" id="CLU_049382_4_1_6"/>
<dbReference type="OrthoDB" id="9785995at2"/>
<dbReference type="Proteomes" id="UP000001022">
    <property type="component" value="Chromosome"/>
</dbReference>
<dbReference type="GO" id="GO:0005829">
    <property type="term" value="C:cytosol"/>
    <property type="evidence" value="ECO:0007669"/>
    <property type="project" value="TreeGrafter"/>
</dbReference>
<dbReference type="GO" id="GO:0016279">
    <property type="term" value="F:protein-lysine N-methyltransferase activity"/>
    <property type="evidence" value="ECO:0007669"/>
    <property type="project" value="TreeGrafter"/>
</dbReference>
<dbReference type="GO" id="GO:0032259">
    <property type="term" value="P:methylation"/>
    <property type="evidence" value="ECO:0007669"/>
    <property type="project" value="UniProtKB-KW"/>
</dbReference>
<dbReference type="CDD" id="cd02440">
    <property type="entry name" value="AdoMet_MTases"/>
    <property type="match status" value="1"/>
</dbReference>
<dbReference type="Gene3D" id="3.40.50.150">
    <property type="entry name" value="Vaccinia Virus protein VP39"/>
    <property type="match status" value="1"/>
</dbReference>
<dbReference type="HAMAP" id="MF_00735">
    <property type="entry name" value="Methyltr_PrmA"/>
    <property type="match status" value="1"/>
</dbReference>
<dbReference type="InterPro" id="IPR050078">
    <property type="entry name" value="Ribosomal_L11_MeTrfase_PrmA"/>
</dbReference>
<dbReference type="InterPro" id="IPR004498">
    <property type="entry name" value="Ribosomal_PrmA_MeTrfase"/>
</dbReference>
<dbReference type="InterPro" id="IPR029063">
    <property type="entry name" value="SAM-dependent_MTases_sf"/>
</dbReference>
<dbReference type="NCBIfam" id="TIGR00406">
    <property type="entry name" value="prmA"/>
    <property type="match status" value="1"/>
</dbReference>
<dbReference type="PANTHER" id="PTHR43648">
    <property type="entry name" value="ELECTRON TRANSFER FLAVOPROTEIN BETA SUBUNIT LYSINE METHYLTRANSFERASE"/>
    <property type="match status" value="1"/>
</dbReference>
<dbReference type="PANTHER" id="PTHR43648:SF1">
    <property type="entry name" value="ELECTRON TRANSFER FLAVOPROTEIN BETA SUBUNIT LYSINE METHYLTRANSFERASE"/>
    <property type="match status" value="1"/>
</dbReference>
<dbReference type="Pfam" id="PF06325">
    <property type="entry name" value="PrmA"/>
    <property type="match status" value="1"/>
</dbReference>
<dbReference type="PIRSF" id="PIRSF000401">
    <property type="entry name" value="RPL11_MTase"/>
    <property type="match status" value="1"/>
</dbReference>
<dbReference type="SUPFAM" id="SSF53335">
    <property type="entry name" value="S-adenosyl-L-methionine-dependent methyltransferases"/>
    <property type="match status" value="1"/>
</dbReference>
<reference key="1">
    <citation type="submission" date="2003-06" db="EMBL/GenBank/DDBJ databases">
        <title>The complete genome sequence of Haemophilus ducreyi.</title>
        <authorList>
            <person name="Munson R.S. Jr."/>
            <person name="Ray W.C."/>
            <person name="Mahairas G."/>
            <person name="Sabo P."/>
            <person name="Mungur R."/>
            <person name="Johnson L."/>
            <person name="Nguyen D."/>
            <person name="Wang J."/>
            <person name="Forst C."/>
            <person name="Hood L."/>
        </authorList>
    </citation>
    <scope>NUCLEOTIDE SEQUENCE [LARGE SCALE GENOMIC DNA]</scope>
    <source>
        <strain>35000HP / ATCC 700724</strain>
    </source>
</reference>
<protein>
    <recommendedName>
        <fullName evidence="1">Ribosomal protein L11 methyltransferase</fullName>
        <shortName evidence="1">L11 Mtase</shortName>
        <ecNumber evidence="1">2.1.1.-</ecNumber>
    </recommendedName>
</protein>
<evidence type="ECO:0000255" key="1">
    <source>
        <dbReference type="HAMAP-Rule" id="MF_00735"/>
    </source>
</evidence>
<proteinExistence type="inferred from homology"/>